<feature type="chain" id="PRO_0000133711" description="Probable WRKY transcription factor 70">
    <location>
        <begin position="1"/>
        <end position="294"/>
    </location>
</feature>
<feature type="DNA-binding region" description="WRKY" evidence="2">
    <location>
        <begin position="114"/>
        <end position="182"/>
    </location>
</feature>
<feature type="region of interest" description="Disordered" evidence="4">
    <location>
        <begin position="72"/>
        <end position="94"/>
    </location>
</feature>
<feature type="region of interest" description="Disordered" evidence="4">
    <location>
        <begin position="201"/>
        <end position="229"/>
    </location>
</feature>
<feature type="short sequence motif" description="Nuclear localization signal" evidence="3">
    <location>
        <begin position="90"/>
        <end position="97"/>
    </location>
</feature>
<feature type="compositionally biased region" description="Basic and acidic residues" evidence="4">
    <location>
        <begin position="79"/>
        <end position="91"/>
    </location>
</feature>
<feature type="sequence conflict" description="In Ref. 5; AAM64939." evidence="26" ref="5">
    <original>S</original>
    <variation>T</variation>
    <location>
        <position position="210"/>
    </location>
</feature>
<feature type="sequence conflict" description="In Ref. 5; AAM64939." evidence="26" ref="5">
    <original>E</original>
    <variation>EE</variation>
    <location>
        <position position="216"/>
    </location>
</feature>
<comment type="function">
    <text evidence="1 5 6 7 8 11 12 13 14 17 18 19 20 21 22 23 24">Transcription factor involved in senescence, biotic and abiotic stress responses by modulating various phytohormones signaling pathways (PubMed:14742872, PubMed:16623907, PubMed:17310369, PubMed:28576847). Interacts specifically with the W box (5'-(T)TGAC[CT]-3'), a frequently occurring elicitor-responsive cis-acting element (By similarity). Binds to the 5'-[CT]GACTTTT-3' motif in promoters of target genes to induce their expression (PubMed:24104863). Binding to the W-box element of PR-1 promoter is mediated by not-sumoylated NPR1 in the absence of salicylic acid (PubMed:26269953). Plays an important but not indispensable role in jasmonate and salicylic acid signaling (PubMed:18713432). Positively regulates the salicylic acid (SA)-mediated signal pathway, but negatively the jasmonic acid (JA)-mediated signal pathway, thus determining the balance between these mutually antagonistic pathways (PubMed:14742872, PubMed:16623907, PubMed:18713432, PubMed:28837631). Together with WRKY46, WRKY53 and WRKY54, prevents defense response to the necrotrophic pathogens P.carotovorum and B.cinerea, but promotes defense responses (including SA-induced pathogenesis-related (PR) genes expression) against biotrophic/hemibiotrophic SA-monitored pathogens (e.g. P.syringae, E.carotovora subsp. carotovora SCC3193 and E.cichoracearum), probably by regulating negatively the JA/ET and positively the SA signaling pathways (PubMed:16623907, PubMed:22325892, PubMed:28837631). Contributes to the suppression of jasmonic acid (MeJA)-induced expression of JA-responsive genes (e.g. PDF1.2) (PubMed:16623907, PubMed:22325892). Promotes susceptibility to JA-monitored pathogens (e.g. A.brassicicola), probably by facilitating SA-controlled suppression of JA-mediated defense. Represses the biosynthesis of the phytoalexin camalexin and indol-3-ylmethyl glucosinolate (IGS) (PubMed:16623907). Represses both SA and JA/ethylene (ET) mediated defense marker genes expression (PubMed:17310369). Negative regulator of SA biosynthesis (PubMed:28837631). Negative regulator of EDS1-dependent defense against E.amylovora (PubMed:22316300). Required for RPP4-mediated disease resistance and basal defense against H.parasitica, probably via late up-regulation (LURP) of resistance genes (e.g. CML10/CaBP22 and LURP1) (PubMed:17313163). Probably involved in defense responses toward insects (e.g. P.xylostella and B.brassicae) (PubMed:25339349). Together with WRKY54, negative regulator of developmental senescence, probably via the regulation of several senescence-associated markers genes (PubMed:17310369, PubMed:22268143). Together with WRKY46 and WRKY54, promotes brassinosteroid (BR)-regulated plant growth but prevent drought response by modulating gene expression (PubMed:28576847). In collaboration with WRKY54, prevents stomatal closure and, consequently, osmotic stress tolerance (PubMed:23815736). Regulates rhizobacterium B.cereus AR156-induced systemic resistance (ISR) to P.syringae pv. tomato DC3000 (PubMed:26433201).</text>
</comment>
<comment type="subunit">
    <text evidence="12 20 22">Interacts with WRKY30 (PubMed:22268143). Binds to BZR2/BES1 to cooperatively regulate the expression of target genes (PubMed:28576847). Binds to unmodified (i.e. not sumoylated) NPR1 (PubMed:26269953).</text>
</comment>
<comment type="subcellular location">
    <subcellularLocation>
        <location evidence="2 3 7 21">Nucleus</location>
    </subcellularLocation>
</comment>
<comment type="tissue specificity">
    <text evidence="7 12">Expressed in leaves and flowers.</text>
</comment>
<comment type="developmental stage">
    <text evidence="7 12">In flowers, first observed in both stigmatic papillae and the flower abscission zone, later confined to the abscission zone (PubMed:17310369). In leaves, level increases gradually up to the point of leaf senescence (PubMed:17310369, PubMed:22268143).</text>
</comment>
<comment type="induction">
    <text evidence="5 7 9 10 11 12 13 14 15 16 17 19 21">Regulated by MYB44 (PubMed:23067202, PubMed:23603962). Basal expression levels require the presence of endogeneous salicylic acid (SA) (PubMed:14742872, PubMed:17310369). Induced by reactive oxygen species (ROS) (PubMed:22268143). Early but transient accumulation after osmotic stress (e.g. polyethylene glycol, PEG) (PubMed:23815736). Induced by SA; early induction is NPR1-independent, but full-scale induction is NPR1-dependent (PubMed:14742872, PubMed:22268143, PubMed:22325892, PubMed:26433201). Up-regulated by benzothiadiazole (BTH) (PubMed:26433201). Repressed by jasmonic acid (MeJA) by both COI1-dependent and COI1-independent pathways (PubMed:14742872, PubMed:18713432). Triggered by the pathogenic compatible bacteria E.carotovora subsp. carotovora SCC3193 (PubMed:14742872). Induced by P.syringae pv. tomato DC3000 (PubMed:17965588, PubMed:22325892). Stimulated by ATX1 (PubMed:17965588). Up-regulated by E.amylovora (PubMed:22316300). Accumulates during leaf and flower senescence (PubMed:17310369). Induced expression upon simultaneous feeding by caterpillars (e.g. P.xylostella) and aphids (e.g. B.brassicae) at a low density, but lower levels in plants induced with both caterpillars and a high aphid density (PubMed:25339349). Responsive to rhizobacterium B.cereus AR156 in leaves (PubMed:26433201). Regulated by ATX1 by epigenetic histone H3 methylation (PubMed:18375658).</text>
</comment>
<comment type="PTM">
    <text evidence="22">Phosphorylated and destabilized by ASK7/BIN2.</text>
</comment>
<comment type="disruption phenotype">
    <text evidence="5 6 7 8 11 12 13 14 17 21 22 23">Slightly reduced in size (PubMed:17310369). In wrky70-1 mutant, not alteration of responses to both JA and SA (PubMed:18713432). Activation of jasmonic acid (JA)-responsive genes in a COI1-dependent manner (PubMed:14742872). Enhanced disease susceptibility to the necrotrophic bacterial pathogen E.carotovora subsp. carotovora SCC3193. Impaired resistance to the salicylic acid (SA)-monitored fungal pathogen E.cichoracearum. Enhanced JA-induced accumulation of anthocyanins (PubMed:16623907). Compromised basal defense and reduced RPP4-dependent late up-regulation (LURP) of resistance genes (e.g. CML10/CaBP22 and LURP1) upon infection by H.parasitica. Reduced INA- (2,6-dichloroisonicotinic acid, SA analog) mediated resistance toward H.parasitica (PubMed:17313163). Promotion of both developmentally and dark-induced leaf senescence associated with abnormal expression levels of several senescence-associated markers genes (PubMed:17310369, PubMed:22268143). The double mutant wrky54 wrky70 exhibits stronger leaf senescence symptoms (PubMed:22268143). Almost no symptoms in response to E.amylovora (PubMed:22316300). Increased susceptibility to P.syringae associated with reduced PR1 induction in double mutants wrky46 wrky70 and wrky46 wrky53, and triple mutant wrky46 wrky70 wrky53. In these mutants, higher induction of PDF1.2 upon jasmonic acid (MeJA) treatment (PubMed:22325892). The double mutant wrky54 wrky70 exhibits an enhanced tolerance to osmotic stress associated with improved water retention and enhanced stomatal closure as well as salicylic acid (SA) accumulation, but a reduced induction of osmotic stress-responsive genes and reduced accumulation of the osmoprotectant proline (PubMed:23815736). Unstressed wrky54 wrky70 double mutant exhibits increased levels of SA, moderate accumulation of hydrogen peroxide H(2)O(2) and up-regulated expression of both SA and JA/ethylene (ET) responsive defense related genes; thus promoting cell wall fortification and consequently enhancing resistance to necrotrophic pathogens (e.g. P.carotovorum and B.cinerea) associated with reduced cell death, but is not sufficient to trigger hypersensitive reaction (HR)-like cell death and resistance to biotrophic/hemibiotrophic pathogens (e.g. P.syringae), characterized by reduced amount of callose (PubMed:28837631). Reduced rhizobacterium B.cereus AR156-induced systemic resistance (ISR) to P.syringae pv. tomato DC3000 associated with reduced (SA)-mediated signal pathway. Plants lacking both WRKY11 and WRKY70 are totally impaired in B.cereus AR156-mediated ISR (PubMed:26433201). The triple mutant wrky46 wrky54 wrky70 has defects in brassinosteroid (BR)-regulated growth and is more tolerant to drought stress (PubMed:28576847).</text>
</comment>
<comment type="similarity">
    <text evidence="26">Belongs to the WRKY group III family.</text>
</comment>
<dbReference type="EMBL" id="AF421157">
    <property type="protein sequence ID" value="AAL13046.1"/>
    <property type="molecule type" value="mRNA"/>
</dbReference>
<dbReference type="EMBL" id="AL163972">
    <property type="protein sequence ID" value="CAB88043.1"/>
    <property type="molecule type" value="Genomic_DNA"/>
</dbReference>
<dbReference type="EMBL" id="CP002686">
    <property type="protein sequence ID" value="AEE79517.1"/>
    <property type="molecule type" value="Genomic_DNA"/>
</dbReference>
<dbReference type="EMBL" id="AY039933">
    <property type="protein sequence ID" value="AAK64037.1"/>
    <property type="molecule type" value="mRNA"/>
</dbReference>
<dbReference type="EMBL" id="AY142566">
    <property type="protein sequence ID" value="AAN13135.1"/>
    <property type="molecule type" value="mRNA"/>
</dbReference>
<dbReference type="EMBL" id="AY087389">
    <property type="protein sequence ID" value="AAM64939.1"/>
    <property type="molecule type" value="mRNA"/>
</dbReference>
<dbReference type="PIR" id="T49041">
    <property type="entry name" value="T49041"/>
</dbReference>
<dbReference type="RefSeq" id="NP_191199.1">
    <property type="nucleotide sequence ID" value="NM_115498.4"/>
</dbReference>
<dbReference type="SMR" id="Q9LY00"/>
<dbReference type="BioGRID" id="10123">
    <property type="interactions" value="1"/>
</dbReference>
<dbReference type="FunCoup" id="Q9LY00">
    <property type="interactions" value="84"/>
</dbReference>
<dbReference type="IntAct" id="Q9LY00">
    <property type="interactions" value="1"/>
</dbReference>
<dbReference type="STRING" id="3702.Q9LY00"/>
<dbReference type="iPTMnet" id="Q9LY00"/>
<dbReference type="PaxDb" id="3702-AT3G56400.1"/>
<dbReference type="EnsemblPlants" id="AT3G56400.1">
    <property type="protein sequence ID" value="AT3G56400.1"/>
    <property type="gene ID" value="AT3G56400"/>
</dbReference>
<dbReference type="GeneID" id="824807"/>
<dbReference type="Gramene" id="AT3G56400.1">
    <property type="protein sequence ID" value="AT3G56400.1"/>
    <property type="gene ID" value="AT3G56400"/>
</dbReference>
<dbReference type="KEGG" id="ath:AT3G56400"/>
<dbReference type="Araport" id="AT3G56400"/>
<dbReference type="TAIR" id="AT3G56400">
    <property type="gene designation" value="WRKY70"/>
</dbReference>
<dbReference type="eggNOG" id="ENOG502RYCZ">
    <property type="taxonomic scope" value="Eukaryota"/>
</dbReference>
<dbReference type="HOGENOM" id="CLU_066547_0_0_1"/>
<dbReference type="InParanoid" id="Q9LY00"/>
<dbReference type="OMA" id="CNTNAET"/>
<dbReference type="PhylomeDB" id="Q9LY00"/>
<dbReference type="PRO" id="PR:Q9LY00"/>
<dbReference type="Proteomes" id="UP000006548">
    <property type="component" value="Chromosome 3"/>
</dbReference>
<dbReference type="ExpressionAtlas" id="Q9LY00">
    <property type="expression patterns" value="baseline and differential"/>
</dbReference>
<dbReference type="GO" id="GO:0005634">
    <property type="term" value="C:nucleus"/>
    <property type="evidence" value="ECO:0000314"/>
    <property type="project" value="UniProtKB"/>
</dbReference>
<dbReference type="GO" id="GO:0003700">
    <property type="term" value="F:DNA-binding transcription factor activity"/>
    <property type="evidence" value="ECO:0000314"/>
    <property type="project" value="UniProtKB"/>
</dbReference>
<dbReference type="GO" id="GO:0043565">
    <property type="term" value="F:sequence-specific DNA binding"/>
    <property type="evidence" value="ECO:0000314"/>
    <property type="project" value="UniProtKB"/>
</dbReference>
<dbReference type="GO" id="GO:0000976">
    <property type="term" value="F:transcription cis-regulatory region binding"/>
    <property type="evidence" value="ECO:0000353"/>
    <property type="project" value="TAIR"/>
</dbReference>
<dbReference type="GO" id="GO:0009742">
    <property type="term" value="P:brassinosteroid mediated signaling pathway"/>
    <property type="evidence" value="ECO:0007669"/>
    <property type="project" value="UniProtKB-KW"/>
</dbReference>
<dbReference type="GO" id="GO:0010120">
    <property type="term" value="P:camalexin biosynthetic process"/>
    <property type="evidence" value="ECO:0000315"/>
    <property type="project" value="TAIR"/>
</dbReference>
<dbReference type="GO" id="GO:0071456">
    <property type="term" value="P:cellular response to hypoxia"/>
    <property type="evidence" value="ECO:0007007"/>
    <property type="project" value="TAIR"/>
</dbReference>
<dbReference type="GO" id="GO:0042742">
    <property type="term" value="P:defense response to bacterium"/>
    <property type="evidence" value="ECO:0000315"/>
    <property type="project" value="UniProtKB"/>
</dbReference>
<dbReference type="GO" id="GO:0050832">
    <property type="term" value="P:defense response to fungus"/>
    <property type="evidence" value="ECO:0000315"/>
    <property type="project" value="UniProtKB"/>
</dbReference>
<dbReference type="GO" id="GO:0002229">
    <property type="term" value="P:defense response to oomycetes"/>
    <property type="evidence" value="ECO:0000315"/>
    <property type="project" value="UniProtKB"/>
</dbReference>
<dbReference type="GO" id="GO:0009873">
    <property type="term" value="P:ethylene-activated signaling pathway"/>
    <property type="evidence" value="ECO:0007669"/>
    <property type="project" value="UniProtKB-KW"/>
</dbReference>
<dbReference type="GO" id="GO:0080187">
    <property type="term" value="P:floral organ senescence"/>
    <property type="evidence" value="ECO:0000270"/>
    <property type="project" value="UniProtKB"/>
</dbReference>
<dbReference type="GO" id="GO:0009759">
    <property type="term" value="P:indole glucosinolate biosynthetic process"/>
    <property type="evidence" value="ECO:0000315"/>
    <property type="project" value="TAIR"/>
</dbReference>
<dbReference type="GO" id="GO:0009682">
    <property type="term" value="P:induced systemic resistance"/>
    <property type="evidence" value="ECO:0000315"/>
    <property type="project" value="UniProtKB"/>
</dbReference>
<dbReference type="GO" id="GO:0009864">
    <property type="term" value="P:induced systemic resistance, jasmonic acid mediated signaling pathway"/>
    <property type="evidence" value="ECO:0000315"/>
    <property type="project" value="TAIR"/>
</dbReference>
<dbReference type="GO" id="GO:0010150">
    <property type="term" value="P:leaf senescence"/>
    <property type="evidence" value="ECO:0000315"/>
    <property type="project" value="UniProtKB"/>
</dbReference>
<dbReference type="GO" id="GO:0045892">
    <property type="term" value="P:negative regulation of DNA-templated transcription"/>
    <property type="evidence" value="ECO:0000315"/>
    <property type="project" value="TAIR"/>
</dbReference>
<dbReference type="GO" id="GO:1900056">
    <property type="term" value="P:negative regulation of leaf senescence"/>
    <property type="evidence" value="ECO:0000316"/>
    <property type="project" value="TAIR"/>
</dbReference>
<dbReference type="GO" id="GO:0080151">
    <property type="term" value="P:positive regulation of salicylic acid mediated signaling pathway"/>
    <property type="evidence" value="ECO:0000315"/>
    <property type="project" value="UniProtKB"/>
</dbReference>
<dbReference type="GO" id="GO:1900457">
    <property type="term" value="P:regulation of brassinosteroid mediated signaling pathway"/>
    <property type="evidence" value="ECO:0000315"/>
    <property type="project" value="UniProtKB"/>
</dbReference>
<dbReference type="GO" id="GO:0031347">
    <property type="term" value="P:regulation of defense response"/>
    <property type="evidence" value="ECO:0000315"/>
    <property type="project" value="UniProtKB"/>
</dbReference>
<dbReference type="GO" id="GO:0006355">
    <property type="term" value="P:regulation of DNA-templated transcription"/>
    <property type="evidence" value="ECO:0000315"/>
    <property type="project" value="UniProtKB"/>
</dbReference>
<dbReference type="GO" id="GO:0010104">
    <property type="term" value="P:regulation of ethylene-activated signaling pathway"/>
    <property type="evidence" value="ECO:0000315"/>
    <property type="project" value="UniProtKB"/>
</dbReference>
<dbReference type="GO" id="GO:2000022">
    <property type="term" value="P:regulation of jasmonic acid mediated signaling pathway"/>
    <property type="evidence" value="ECO:0000315"/>
    <property type="project" value="UniProtKB"/>
</dbReference>
<dbReference type="GO" id="GO:0047484">
    <property type="term" value="P:regulation of response to osmotic stress"/>
    <property type="evidence" value="ECO:0000315"/>
    <property type="project" value="UniProtKB"/>
</dbReference>
<dbReference type="GO" id="GO:2000070">
    <property type="term" value="P:regulation of response to water deprivation"/>
    <property type="evidence" value="ECO:0000315"/>
    <property type="project" value="UniProtKB"/>
</dbReference>
<dbReference type="GO" id="GO:2000031">
    <property type="term" value="P:regulation of salicylic acid mediated signaling pathway"/>
    <property type="evidence" value="ECO:0000314"/>
    <property type="project" value="UniProtKB"/>
</dbReference>
<dbReference type="GO" id="GO:0090333">
    <property type="term" value="P:regulation of stomatal closure"/>
    <property type="evidence" value="ECO:0000315"/>
    <property type="project" value="UniProtKB"/>
</dbReference>
<dbReference type="GO" id="GO:0009617">
    <property type="term" value="P:response to bacterium"/>
    <property type="evidence" value="ECO:0000270"/>
    <property type="project" value="UniProtKB"/>
</dbReference>
<dbReference type="GO" id="GO:0009625">
    <property type="term" value="P:response to insect"/>
    <property type="evidence" value="ECO:0000270"/>
    <property type="project" value="UniProtKB"/>
</dbReference>
<dbReference type="GO" id="GO:0009753">
    <property type="term" value="P:response to jasmonic acid"/>
    <property type="evidence" value="ECO:0000315"/>
    <property type="project" value="TAIR"/>
</dbReference>
<dbReference type="GO" id="GO:0006970">
    <property type="term" value="P:response to osmotic stress"/>
    <property type="evidence" value="ECO:0000270"/>
    <property type="project" value="UniProtKB"/>
</dbReference>
<dbReference type="GO" id="GO:0000302">
    <property type="term" value="P:response to reactive oxygen species"/>
    <property type="evidence" value="ECO:0000270"/>
    <property type="project" value="UniProtKB"/>
</dbReference>
<dbReference type="GO" id="GO:0009751">
    <property type="term" value="P:response to salicylic acid"/>
    <property type="evidence" value="ECO:0000270"/>
    <property type="project" value="UniProtKB"/>
</dbReference>
<dbReference type="GO" id="GO:0009862">
    <property type="term" value="P:systemic acquired resistance, salicylic acid mediated signaling pathway"/>
    <property type="evidence" value="ECO:0000315"/>
    <property type="project" value="TAIR"/>
</dbReference>
<dbReference type="Gene3D" id="2.20.25.80">
    <property type="entry name" value="WRKY domain"/>
    <property type="match status" value="1"/>
</dbReference>
<dbReference type="InterPro" id="IPR003657">
    <property type="entry name" value="WRKY_dom"/>
</dbReference>
<dbReference type="InterPro" id="IPR036576">
    <property type="entry name" value="WRKY_dom_sf"/>
</dbReference>
<dbReference type="InterPro" id="IPR044810">
    <property type="entry name" value="WRKY_plant"/>
</dbReference>
<dbReference type="PANTHER" id="PTHR32096">
    <property type="entry name" value="WRKY TRANSCRIPTION FACTOR 30-RELATED-RELATED"/>
    <property type="match status" value="1"/>
</dbReference>
<dbReference type="PANTHER" id="PTHR32096:SF83">
    <property type="entry name" value="WRKY TRANSCRIPTION FACTOR 54-RELATED"/>
    <property type="match status" value="1"/>
</dbReference>
<dbReference type="Pfam" id="PF03106">
    <property type="entry name" value="WRKY"/>
    <property type="match status" value="1"/>
</dbReference>
<dbReference type="SMART" id="SM00774">
    <property type="entry name" value="WRKY"/>
    <property type="match status" value="1"/>
</dbReference>
<dbReference type="SUPFAM" id="SSF118290">
    <property type="entry name" value="WRKY DNA-binding domain"/>
    <property type="match status" value="1"/>
</dbReference>
<dbReference type="PROSITE" id="PS50811">
    <property type="entry name" value="WRKY"/>
    <property type="match status" value="1"/>
</dbReference>
<proteinExistence type="evidence at protein level"/>
<keyword id="KW-1070">Brassinosteroid signaling pathway</keyword>
<keyword id="KW-0238">DNA-binding</keyword>
<keyword id="KW-0936">Ethylene signaling pathway</keyword>
<keyword id="KW-1184">Jasmonic acid signaling pathway</keyword>
<keyword id="KW-0539">Nucleus</keyword>
<keyword id="KW-0611">Plant defense</keyword>
<keyword id="KW-1185">Reference proteome</keyword>
<keyword id="KW-0804">Transcription</keyword>
<keyword id="KW-0805">Transcription regulation</keyword>
<gene>
    <name evidence="25" type="primary">WRKY70</name>
    <name evidence="27" type="ordered locus">At3g56400</name>
    <name evidence="28" type="ORF">T5P19.50</name>
</gene>
<reference key="1">
    <citation type="submission" date="2001-09" db="EMBL/GenBank/DDBJ databases">
        <title>Arabidopsis thaliana transcription factor WRKY70.</title>
        <authorList>
            <person name="Ulker B."/>
            <person name="Kushnir S."/>
            <person name="Somssich I.E."/>
        </authorList>
    </citation>
    <scope>NUCLEOTIDE SEQUENCE [MRNA]</scope>
    <source>
        <strain>cv. Columbia</strain>
        <tissue>Flower</tissue>
    </source>
</reference>
<reference key="2">
    <citation type="journal article" date="2000" name="Nature">
        <title>Sequence and analysis of chromosome 3 of the plant Arabidopsis thaliana.</title>
        <authorList>
            <person name="Salanoubat M."/>
            <person name="Lemcke K."/>
            <person name="Rieger M."/>
            <person name="Ansorge W."/>
            <person name="Unseld M."/>
            <person name="Fartmann B."/>
            <person name="Valle G."/>
            <person name="Bloecker H."/>
            <person name="Perez-Alonso M."/>
            <person name="Obermaier B."/>
            <person name="Delseny M."/>
            <person name="Boutry M."/>
            <person name="Grivell L.A."/>
            <person name="Mache R."/>
            <person name="Puigdomenech P."/>
            <person name="De Simone V."/>
            <person name="Choisne N."/>
            <person name="Artiguenave F."/>
            <person name="Robert C."/>
            <person name="Brottier P."/>
            <person name="Wincker P."/>
            <person name="Cattolico L."/>
            <person name="Weissenbach J."/>
            <person name="Saurin W."/>
            <person name="Quetier F."/>
            <person name="Schaefer M."/>
            <person name="Mueller-Auer S."/>
            <person name="Gabel C."/>
            <person name="Fuchs M."/>
            <person name="Benes V."/>
            <person name="Wurmbach E."/>
            <person name="Drzonek H."/>
            <person name="Erfle H."/>
            <person name="Jordan N."/>
            <person name="Bangert S."/>
            <person name="Wiedelmann R."/>
            <person name="Kranz H."/>
            <person name="Voss H."/>
            <person name="Holland R."/>
            <person name="Brandt P."/>
            <person name="Nyakatura G."/>
            <person name="Vezzi A."/>
            <person name="D'Angelo M."/>
            <person name="Pallavicini A."/>
            <person name="Toppo S."/>
            <person name="Simionati B."/>
            <person name="Conrad A."/>
            <person name="Hornischer K."/>
            <person name="Kauer G."/>
            <person name="Loehnert T.-H."/>
            <person name="Nordsiek G."/>
            <person name="Reichelt J."/>
            <person name="Scharfe M."/>
            <person name="Schoen O."/>
            <person name="Bargues M."/>
            <person name="Terol J."/>
            <person name="Climent J."/>
            <person name="Navarro P."/>
            <person name="Collado C."/>
            <person name="Perez-Perez A."/>
            <person name="Ottenwaelder B."/>
            <person name="Duchemin D."/>
            <person name="Cooke R."/>
            <person name="Laudie M."/>
            <person name="Berger-Llauro C."/>
            <person name="Purnelle B."/>
            <person name="Masuy D."/>
            <person name="de Haan M."/>
            <person name="Maarse A.C."/>
            <person name="Alcaraz J.-P."/>
            <person name="Cottet A."/>
            <person name="Casacuberta E."/>
            <person name="Monfort A."/>
            <person name="Argiriou A."/>
            <person name="Flores M."/>
            <person name="Liguori R."/>
            <person name="Vitale D."/>
            <person name="Mannhaupt G."/>
            <person name="Haase D."/>
            <person name="Schoof H."/>
            <person name="Rudd S."/>
            <person name="Zaccaria P."/>
            <person name="Mewes H.-W."/>
            <person name="Mayer K.F.X."/>
            <person name="Kaul S."/>
            <person name="Town C.D."/>
            <person name="Koo H.L."/>
            <person name="Tallon L.J."/>
            <person name="Jenkins J."/>
            <person name="Rooney T."/>
            <person name="Rizzo M."/>
            <person name="Walts A."/>
            <person name="Utterback T."/>
            <person name="Fujii C.Y."/>
            <person name="Shea T.P."/>
            <person name="Creasy T.H."/>
            <person name="Haas B."/>
            <person name="Maiti R."/>
            <person name="Wu D."/>
            <person name="Peterson J."/>
            <person name="Van Aken S."/>
            <person name="Pai G."/>
            <person name="Militscher J."/>
            <person name="Sellers P."/>
            <person name="Gill J.E."/>
            <person name="Feldblyum T.V."/>
            <person name="Preuss D."/>
            <person name="Lin X."/>
            <person name="Nierman W.C."/>
            <person name="Salzberg S.L."/>
            <person name="White O."/>
            <person name="Venter J.C."/>
            <person name="Fraser C.M."/>
            <person name="Kaneko T."/>
            <person name="Nakamura Y."/>
            <person name="Sato S."/>
            <person name="Kato T."/>
            <person name="Asamizu E."/>
            <person name="Sasamoto S."/>
            <person name="Kimura T."/>
            <person name="Idesawa K."/>
            <person name="Kawashima K."/>
            <person name="Kishida Y."/>
            <person name="Kiyokawa C."/>
            <person name="Kohara M."/>
            <person name="Matsumoto M."/>
            <person name="Matsuno A."/>
            <person name="Muraki A."/>
            <person name="Nakayama S."/>
            <person name="Nakazaki N."/>
            <person name="Shinpo S."/>
            <person name="Takeuchi C."/>
            <person name="Wada T."/>
            <person name="Watanabe A."/>
            <person name="Yamada M."/>
            <person name="Yasuda M."/>
            <person name="Tabata S."/>
        </authorList>
    </citation>
    <scope>NUCLEOTIDE SEQUENCE [LARGE SCALE GENOMIC DNA]</scope>
    <source>
        <strain>cv. Columbia</strain>
    </source>
</reference>
<reference key="3">
    <citation type="journal article" date="2017" name="Plant J.">
        <title>Araport11: a complete reannotation of the Arabidopsis thaliana reference genome.</title>
        <authorList>
            <person name="Cheng C.Y."/>
            <person name="Krishnakumar V."/>
            <person name="Chan A.P."/>
            <person name="Thibaud-Nissen F."/>
            <person name="Schobel S."/>
            <person name="Town C.D."/>
        </authorList>
    </citation>
    <scope>GENOME REANNOTATION</scope>
    <source>
        <strain>cv. Columbia</strain>
    </source>
</reference>
<reference key="4">
    <citation type="journal article" date="2003" name="Science">
        <title>Empirical analysis of transcriptional activity in the Arabidopsis genome.</title>
        <authorList>
            <person name="Yamada K."/>
            <person name="Lim J."/>
            <person name="Dale J.M."/>
            <person name="Chen H."/>
            <person name="Shinn P."/>
            <person name="Palm C.J."/>
            <person name="Southwick A.M."/>
            <person name="Wu H.C."/>
            <person name="Kim C.J."/>
            <person name="Nguyen M."/>
            <person name="Pham P.K."/>
            <person name="Cheuk R.F."/>
            <person name="Karlin-Newmann G."/>
            <person name="Liu S.X."/>
            <person name="Lam B."/>
            <person name="Sakano H."/>
            <person name="Wu T."/>
            <person name="Yu G."/>
            <person name="Miranda M."/>
            <person name="Quach H.L."/>
            <person name="Tripp M."/>
            <person name="Chang C.H."/>
            <person name="Lee J.M."/>
            <person name="Toriumi M.J."/>
            <person name="Chan M.M."/>
            <person name="Tang C.C."/>
            <person name="Onodera C.S."/>
            <person name="Deng J.M."/>
            <person name="Akiyama K."/>
            <person name="Ansari Y."/>
            <person name="Arakawa T."/>
            <person name="Banh J."/>
            <person name="Banno F."/>
            <person name="Bowser L."/>
            <person name="Brooks S.Y."/>
            <person name="Carninci P."/>
            <person name="Chao Q."/>
            <person name="Choy N."/>
            <person name="Enju A."/>
            <person name="Goldsmith A.D."/>
            <person name="Gurjal M."/>
            <person name="Hansen N.F."/>
            <person name="Hayashizaki Y."/>
            <person name="Johnson-Hopson C."/>
            <person name="Hsuan V.W."/>
            <person name="Iida K."/>
            <person name="Karnes M."/>
            <person name="Khan S."/>
            <person name="Koesema E."/>
            <person name="Ishida J."/>
            <person name="Jiang P.X."/>
            <person name="Jones T."/>
            <person name="Kawai J."/>
            <person name="Kamiya A."/>
            <person name="Meyers C."/>
            <person name="Nakajima M."/>
            <person name="Narusaka M."/>
            <person name="Seki M."/>
            <person name="Sakurai T."/>
            <person name="Satou M."/>
            <person name="Tamse R."/>
            <person name="Vaysberg M."/>
            <person name="Wallender E.K."/>
            <person name="Wong C."/>
            <person name="Yamamura Y."/>
            <person name="Yuan S."/>
            <person name="Shinozaki K."/>
            <person name="Davis R.W."/>
            <person name="Theologis A."/>
            <person name="Ecker J.R."/>
        </authorList>
    </citation>
    <scope>NUCLEOTIDE SEQUENCE [LARGE SCALE MRNA]</scope>
    <source>
        <strain>cv. Columbia</strain>
    </source>
</reference>
<reference key="5">
    <citation type="submission" date="2002-03" db="EMBL/GenBank/DDBJ databases">
        <title>Full-length cDNA from Arabidopsis thaliana.</title>
        <authorList>
            <person name="Brover V.V."/>
            <person name="Troukhan M.E."/>
            <person name="Alexandrov N.A."/>
            <person name="Lu Y.-P."/>
            <person name="Flavell R.B."/>
            <person name="Feldmann K.A."/>
        </authorList>
    </citation>
    <scope>NUCLEOTIDE SEQUENCE [LARGE SCALE MRNA]</scope>
</reference>
<reference key="6">
    <citation type="journal article" date="2004" name="Plant Cell">
        <title>The WRKY70 transcription factor: a node of convergence for jasmonate-mediated and salicylate-mediated signals in plant defense.</title>
        <authorList>
            <person name="Li J."/>
            <person name="Brader G."/>
            <person name="Palva E.T."/>
        </authorList>
    </citation>
    <scope>FUNCTION</scope>
    <scope>DISRUPTION PHENOTYPE</scope>
    <scope>INDUCTION BY ERWINIA CAROTOVORA; SALICYLIC ACID AND JASMONIC ACID</scope>
</reference>
<reference key="7">
    <citation type="journal article" date="2006" name="Plant J.">
        <title>WRKY70 modulates the selection of signaling pathways in plant defense.</title>
        <authorList>
            <person name="Li J."/>
            <person name="Brader G."/>
            <person name="Kariola T."/>
            <person name="Palva E.T."/>
        </authorList>
    </citation>
    <scope>FUNCTION</scope>
    <scope>DISRUPTION PHENOTYPE</scope>
</reference>
<reference key="8">
    <citation type="journal article" date="2007" name="Epigenetics">
        <title>Epigenetic control of a transcription factor at the cross section of two antagonistic pathways.</title>
        <authorList>
            <person name="Alvarez-Venegas R."/>
            <person name="Abdallat A.A."/>
            <person name="Guo M."/>
            <person name="Alfano J.R."/>
            <person name="Avramova Z."/>
        </authorList>
    </citation>
    <scope>INDUCTION BY PSEUDOMONAS SYRINGAE AND ATX1</scope>
</reference>
<reference key="9">
    <citation type="journal article" date="2007" name="Mol. Plant Microbe Interact.">
        <title>Arabidopsis WRKY70 is required for full RPP4-mediated disease resistance and basal defense against Hyaloperonospora parasitica.</title>
        <authorList>
            <person name="Knoth C."/>
            <person name="Ringler J."/>
            <person name="Dangl J.L."/>
            <person name="Eulgem T."/>
        </authorList>
    </citation>
    <scope>FUNCTION</scope>
    <scope>DISRUPTION PHENOTYPE</scope>
    <source>
        <strain>cv. Columbia</strain>
    </source>
</reference>
<reference key="10">
    <citation type="journal article" date="2007" name="Planta">
        <title>The WRKY70 transcription factor of Arabidopsis influences both the plant senescence and defense signaling pathways.</title>
        <authorList>
            <person name="Uelker B."/>
            <person name="Shahid Mukhtar M."/>
            <person name="Somssich I.E."/>
        </authorList>
    </citation>
    <scope>FUNCTION</scope>
    <scope>DISRUPTION PHENOTYPE</scope>
    <scope>TISSUE SPECIFICITY</scope>
    <scope>INDUCTION BY SENESCENCE</scope>
    <scope>DEVELOPMENTAL STAGE</scope>
    <scope>SUBCELLULAR LOCATION</scope>
    <source>
        <strain>cv. Columbia</strain>
    </source>
</reference>
<reference key="11">
    <citation type="journal article" date="2008" name="J. Integr. Plant Biol.">
        <title>Transcription factor WRKY70 displays important but no indispensable roles in jasmonate and salicylic acid signaling.</title>
        <authorList>
            <person name="Ren C.-M."/>
            <person name="Zhu Q."/>
            <person name="Gao B.-D."/>
            <person name="Ke S.-Y."/>
            <person name="Yu W.-C."/>
            <person name="Xie D.-X."/>
            <person name="Peng W."/>
        </authorList>
    </citation>
    <scope>FUNCTION</scope>
    <scope>DISRUPTION PHENOTYPE</scope>
    <scope>REPRESSION BY JASMONIC ACID</scope>
</reference>
<reference key="12">
    <citation type="journal article" date="2008" name="Plant Cell">
        <title>The highly similar Arabidopsis homologs of trithorax ATX1 and ATX2 encode proteins with divergent biochemical functions.</title>
        <authorList>
            <person name="Saleh A."/>
            <person name="Alvarez-Venegas R."/>
            <person name="Yilmaz M."/>
            <person name="Le O."/>
            <person name="Hou G."/>
            <person name="Sadder M."/>
            <person name="Al-Abdallat A."/>
            <person name="Xia Y."/>
            <person name="Lu G."/>
            <person name="Ladunga I."/>
            <person name="Avramova Z."/>
        </authorList>
    </citation>
    <scope>REGULATION BY ATX1</scope>
    <source>
        <strain>cv. Columbia</strain>
    </source>
</reference>
<reference key="13">
    <citation type="journal article" date="2012" name="J. Exp. Bot.">
        <title>WRKY54 and WRKY70 co-operate as negative regulators of leaf senescence in Arabidopsis thaliana.</title>
        <authorList>
            <person name="Besseau S."/>
            <person name="Li J."/>
            <person name="Palva E.T."/>
        </authorList>
    </citation>
    <scope>FUNCTION</scope>
    <scope>DISRUPTION PHENOTYPE</scope>
    <scope>TISSUE SPECIFICITY</scope>
    <scope>DEVELOPMENTAL STAGE</scope>
    <scope>INTERACTION WITH WRKY30</scope>
    <scope>INDUCTION BY REACTIVE OXYGEN SPECIES AND SALICYLIC ACID</scope>
    <source>
        <strain>cv. Columbia</strain>
    </source>
</reference>
<reference key="14">
    <citation type="journal article" date="2012" name="Mol. Plant Microbe Interact.">
        <title>EDS1 contributes to nonhost resistance of Arabidopsis thaliana against Erwinia amylovora.</title>
        <authorList>
            <person name="Moreau M."/>
            <person name="Degrave A."/>
            <person name="Vedel R."/>
            <person name="Bitton F."/>
            <person name="Patrit O."/>
            <person name="Renou J.-P."/>
            <person name="Barny M.-A."/>
            <person name="Fagard M."/>
        </authorList>
    </citation>
    <scope>FUNCTION</scope>
    <scope>DISRUPTION PHENOTYPE</scope>
    <scope>INDUCTION BY ERWINIA AMYLOVORA</scope>
    <source>
        <strain>cv. Columbia</strain>
    </source>
</reference>
<reference key="15">
    <citation type="journal article" date="2012" name="Plant Sci.">
        <title>Arabidopsis WRKY46 coordinates with WRKY70 and WRKY53 in basal resistance against pathogen Pseudomonas syringae.</title>
        <authorList>
            <person name="Hu Y."/>
            <person name="Dong Q."/>
            <person name="Yu D."/>
        </authorList>
    </citation>
    <scope>FUNCTION</scope>
    <scope>DISRUPTION PHENOTYPE</scope>
    <scope>INDUCTION BY SALICYLIC ACID AND PSEUDOMONAS SYRINGAE</scope>
    <source>
        <strain>cv. Columbia</strain>
    </source>
</reference>
<reference key="16">
    <citation type="journal article" date="2013" name="New Phytol.">
        <title>Defense-related transcription factors WRKY70 and WRKY54 modulate osmotic stress tolerance by regulating stomatal aperture in Arabidopsis.</title>
        <authorList>
            <person name="Li J."/>
            <person name="Besseau S."/>
            <person name="Toeroenen P."/>
            <person name="Sipari N."/>
            <person name="Kollist H."/>
            <person name="Holm L."/>
            <person name="Palva E.T."/>
        </authorList>
    </citation>
    <scope>FUNCTION</scope>
    <scope>DISRUPTION PHENOTYPE</scope>
    <scope>INDUCTION BY OSMOTIC STRESS</scope>
    <source>
        <strain>cv. Columbia</strain>
    </source>
</reference>
<reference key="17">
    <citation type="journal article" date="2013" name="Plant J.">
        <title>AtMYB44 regulates WRKY70 expression and modulates antagonistic interaction between salicylic acid and jasmonic acid signaling.</title>
        <authorList>
            <person name="Shim J.S."/>
            <person name="Jung C."/>
            <person name="Lee S."/>
            <person name="Min K."/>
            <person name="Lee Y.-W."/>
            <person name="Choi Y."/>
            <person name="Lee J.S."/>
            <person name="Song J.T."/>
            <person name="Kim J.-K."/>
            <person name="Choi Y.D."/>
        </authorList>
    </citation>
    <scope>INDUCTION BY MYB44</scope>
    <source>
        <strain>cv. Columbia</strain>
    </source>
</reference>
<reference key="18">
    <citation type="journal article" date="2013" name="Plant Signal. Behav.">
        <title>Direct regulation of WRKY70 by AtMYB44 in plant defense responses.</title>
        <authorList>
            <person name="Shim J.S."/>
            <person name="Choi Y.D."/>
        </authorList>
    </citation>
    <scope>INDUCTION BY MYB44</scope>
</reference>
<reference key="19">
    <citation type="journal article" date="2014" name="Plant Mol. Biol.">
        <title>Identification of a novel type of WRKY transcription factor binding site in elicitor-responsive cis-sequences from Arabidopsis thaliana.</title>
        <authorList>
            <person name="Machens F."/>
            <person name="Becker M."/>
            <person name="Umrath F."/>
            <person name="Hehl R."/>
        </authorList>
    </citation>
    <scope>FUNCTION</scope>
    <source>
        <strain>cv. Columbia</strain>
    </source>
</reference>
<reference key="20">
    <citation type="journal article" date="2015" name="Cell Host Microbe">
        <title>Posttranslational modifications of the master transcriptional regulator NPR1 enable dynamic but tight control of plant immune responses.</title>
        <authorList>
            <person name="Saleh A."/>
            <person name="Withers J."/>
            <person name="Mohan R."/>
            <person name="Marques J."/>
            <person name="Gu Y."/>
            <person name="Yan S."/>
            <person name="Zavaliev R."/>
            <person name="Nomoto M."/>
            <person name="Tada Y."/>
            <person name="Dong X."/>
        </authorList>
    </citation>
    <scope>FUNCTION</scope>
    <scope>INTERACTION WITH NPR1</scope>
    <source>
        <strain>cv. Columbia</strain>
    </source>
</reference>
<reference key="21">
    <citation type="journal article" date="2015" name="Plant Cell Physiol.">
        <title>Density-dependent interference of aphids with caterpillar-induced defenses in Arabidopsis: involvement of phytohormones and transcription factors.</title>
        <authorList>
            <person name="Kroes A."/>
            <person name="van Loon J.J.A."/>
            <person name="Dicke M."/>
        </authorList>
    </citation>
    <scope>INDUCTION BY PLUTELLA XYLOSTELLA AND BREVICORYNE BRASSICAE</scope>
    <source>
        <strain>cv. Columbia</strain>
    </source>
</reference>
<reference key="22">
    <citation type="journal article" date="2016" name="J. Exp. Bot.">
        <title>Transcription factors WRKY70 and WRKY11 served as regulators in rhizobacterium Bacillus cereus AR156-induced systemic resistance to Pseudomonas syringae pv. tomato DC3000 in Arabidopsis.</title>
        <authorList>
            <person name="Jiang C.-H."/>
            <person name="Huang Z.-Y."/>
            <person name="Xie P."/>
            <person name="Gu C."/>
            <person name="Li K."/>
            <person name="Wang D.-C."/>
            <person name="Yu Y.-Y."/>
            <person name="Fan Z.-H."/>
            <person name="Wang C.-J."/>
            <person name="Wang Y.-P."/>
            <person name="Guo Y.-H."/>
            <person name="Guo J.-H."/>
        </authorList>
    </citation>
    <scope>FUNCTION</scope>
    <scope>DISRUPTION PHENOTYPE</scope>
    <scope>INDUCTION BY BACILLUS CEREUS; SALICYLIC ACID AND BTH</scope>
    <scope>SUBCELLULAR LOCATION</scope>
    <source>
        <strain>cv. Columbia</strain>
    </source>
</reference>
<reference key="23">
    <citation type="journal article" date="2017" name="Plant Cell">
        <title>Arabidopsis WRKY46, WRKY54, and WRKY70 transcription factors are involved in brassinosteroid-regulated plant growth and drought responses.</title>
        <authorList>
            <person name="Chen J."/>
            <person name="Nolan T.M."/>
            <person name="Ye H."/>
            <person name="Zhang M."/>
            <person name="Tong H."/>
            <person name="Xin P."/>
            <person name="Chu J."/>
            <person name="Chu C."/>
            <person name="Li Z."/>
            <person name="Yin Y."/>
        </authorList>
    </citation>
    <scope>FUNCTION</scope>
    <scope>DISRUPTION PHENOTYPE</scope>
    <scope>INTERACTION WITH BZR2/BES1</scope>
    <scope>PHOSPHORYLATION BY ASK7/BIN2</scope>
    <source>
        <strain>cv. Columbia</strain>
    </source>
</reference>
<reference key="24">
    <citation type="journal article" date="2017" name="PLoS ONE">
        <title>WRKY70 and its homolog WRKY54 negatively modulate the cell wall-associated defenses to necrotrophic pathogens in Arabidopsis.</title>
        <authorList>
            <person name="Li J."/>
            <person name="Zhong R."/>
            <person name="Palva E.T."/>
        </authorList>
    </citation>
    <scope>FUNCTION</scope>
    <scope>DISRUPTION PHENOTYPE</scope>
    <source>
        <strain>cv. Columbia</strain>
    </source>
</reference>
<organism>
    <name type="scientific">Arabidopsis thaliana</name>
    <name type="common">Mouse-ear cress</name>
    <dbReference type="NCBI Taxonomy" id="3702"/>
    <lineage>
        <taxon>Eukaryota</taxon>
        <taxon>Viridiplantae</taxon>
        <taxon>Streptophyta</taxon>
        <taxon>Embryophyta</taxon>
        <taxon>Tracheophyta</taxon>
        <taxon>Spermatophyta</taxon>
        <taxon>Magnoliopsida</taxon>
        <taxon>eudicotyledons</taxon>
        <taxon>Gunneridae</taxon>
        <taxon>Pentapetalae</taxon>
        <taxon>rosids</taxon>
        <taxon>malvids</taxon>
        <taxon>Brassicales</taxon>
        <taxon>Brassicaceae</taxon>
        <taxon>Camelineae</taxon>
        <taxon>Arabidopsis</taxon>
    </lineage>
</organism>
<protein>
    <recommendedName>
        <fullName evidence="25">Probable WRKY transcription factor 70</fullName>
    </recommendedName>
    <alternativeName>
        <fullName evidence="25">WRKY DNA-binding protein 70</fullName>
    </alternativeName>
</protein>
<sequence length="294" mass="32936">MDTNKAKKLKVMNQLVEGHDLTTQLQQLLSQPGSGLEDLVAKILVCFNNTISVLDTFEPISSSSSLAAVEGSQNASCDNDGKFEDSGDSRKRLGPVKGKRGCYKRKKRSETCTIESTILEDAFSWRKYGQKEILNAKFPRSYFRCTHKYTQGCKATKQVQKVELEPKMFSITYIGNHTCNTNAETPKSKTCDHHDEIFMDSEDHKSPSLSTSMKEEDNPHRHHGSSTENDLSLVWPEMVFEEDYHHQASYVNGKTSTSIDVLGSQDLMVFGGGGDFEFSENEHFSIFSSCSNLS</sequence>
<evidence type="ECO:0000250" key="1">
    <source>
        <dbReference type="UniProtKB" id="Q9SUP6"/>
    </source>
</evidence>
<evidence type="ECO:0000255" key="2">
    <source>
        <dbReference type="PROSITE-ProRule" id="PRU00223"/>
    </source>
</evidence>
<evidence type="ECO:0000255" key="3">
    <source>
        <dbReference type="PROSITE-ProRule" id="PRU00768"/>
    </source>
</evidence>
<evidence type="ECO:0000256" key="4">
    <source>
        <dbReference type="SAM" id="MobiDB-lite"/>
    </source>
</evidence>
<evidence type="ECO:0000269" key="5">
    <source>
    </source>
</evidence>
<evidence type="ECO:0000269" key="6">
    <source>
    </source>
</evidence>
<evidence type="ECO:0000269" key="7">
    <source>
    </source>
</evidence>
<evidence type="ECO:0000269" key="8">
    <source>
    </source>
</evidence>
<evidence type="ECO:0000269" key="9">
    <source>
    </source>
</evidence>
<evidence type="ECO:0000269" key="10">
    <source>
    </source>
</evidence>
<evidence type="ECO:0000269" key="11">
    <source>
    </source>
</evidence>
<evidence type="ECO:0000269" key="12">
    <source>
    </source>
</evidence>
<evidence type="ECO:0000269" key="13">
    <source>
    </source>
</evidence>
<evidence type="ECO:0000269" key="14">
    <source>
    </source>
</evidence>
<evidence type="ECO:0000269" key="15">
    <source>
    </source>
</evidence>
<evidence type="ECO:0000269" key="16">
    <source>
    </source>
</evidence>
<evidence type="ECO:0000269" key="17">
    <source>
    </source>
</evidence>
<evidence type="ECO:0000269" key="18">
    <source>
    </source>
</evidence>
<evidence type="ECO:0000269" key="19">
    <source>
    </source>
</evidence>
<evidence type="ECO:0000269" key="20">
    <source>
    </source>
</evidence>
<evidence type="ECO:0000269" key="21">
    <source>
    </source>
</evidence>
<evidence type="ECO:0000269" key="22">
    <source>
    </source>
</evidence>
<evidence type="ECO:0000269" key="23">
    <source>
    </source>
</evidence>
<evidence type="ECO:0000303" key="24">
    <source>
    </source>
</evidence>
<evidence type="ECO:0000303" key="25">
    <source ref="1"/>
</evidence>
<evidence type="ECO:0000305" key="26"/>
<evidence type="ECO:0000312" key="27">
    <source>
        <dbReference type="Araport" id="AT3G56400"/>
    </source>
</evidence>
<evidence type="ECO:0000312" key="28">
    <source>
        <dbReference type="EMBL" id="CAB88043.1"/>
    </source>
</evidence>
<name>WRK70_ARATH</name>
<accession>Q9LY00</accession>
<accession>Q8LB71</accession>